<evidence type="ECO:0000255" key="1">
    <source>
        <dbReference type="HAMAP-Rule" id="MF_00230"/>
    </source>
</evidence>
<feature type="chain" id="PRO_1000204369" description="Nicotinate-nucleotide--dimethylbenzimidazole phosphoribosyltransferase">
    <location>
        <begin position="1"/>
        <end position="349"/>
    </location>
</feature>
<feature type="active site" description="Proton acceptor" evidence="1">
    <location>
        <position position="315"/>
    </location>
</feature>
<proteinExistence type="inferred from homology"/>
<comment type="function">
    <text evidence="1">Catalyzes the synthesis of alpha-ribazole-5'-phosphate from nicotinate mononucleotide (NAMN) and 5,6-dimethylbenzimidazole (DMB).</text>
</comment>
<comment type="catalytic activity">
    <reaction evidence="1">
        <text>5,6-dimethylbenzimidazole + nicotinate beta-D-ribonucleotide = alpha-ribazole 5'-phosphate + nicotinate + H(+)</text>
        <dbReference type="Rhea" id="RHEA:11196"/>
        <dbReference type="ChEBI" id="CHEBI:15378"/>
        <dbReference type="ChEBI" id="CHEBI:15890"/>
        <dbReference type="ChEBI" id="CHEBI:32544"/>
        <dbReference type="ChEBI" id="CHEBI:57502"/>
        <dbReference type="ChEBI" id="CHEBI:57918"/>
        <dbReference type="EC" id="2.4.2.21"/>
    </reaction>
</comment>
<comment type="pathway">
    <text evidence="1">Nucleoside biosynthesis; alpha-ribazole biosynthesis; alpha-ribazole from 5,6-dimethylbenzimidazole: step 1/2.</text>
</comment>
<comment type="similarity">
    <text evidence="1">Belongs to the CobT family.</text>
</comment>
<protein>
    <recommendedName>
        <fullName evidence="1">Nicotinate-nucleotide--dimethylbenzimidazole phosphoribosyltransferase</fullName>
        <shortName evidence="1">NN:DBI PRT</shortName>
        <ecNumber evidence="1">2.4.2.21</ecNumber>
    </recommendedName>
    <alternativeName>
        <fullName evidence="1">N(1)-alpha-phosphoribosyltransferase</fullName>
    </alternativeName>
</protein>
<keyword id="KW-0169">Cobalamin biosynthesis</keyword>
<keyword id="KW-0328">Glycosyltransferase</keyword>
<keyword id="KW-0808">Transferase</keyword>
<reference key="1">
    <citation type="journal article" date="2011" name="J. Bacteriol.">
        <title>Complete genome sequence of the metabolically versatile plant growth-promoting endophyte, Variovorax paradoxus S110.</title>
        <authorList>
            <person name="Han J.I."/>
            <person name="Choi H.K."/>
            <person name="Lee S.W."/>
            <person name="Orwin P.M."/>
            <person name="Kim J."/>
            <person name="Laroe S.L."/>
            <person name="Kim T.G."/>
            <person name="O'Neil J."/>
            <person name="Leadbetter J.R."/>
            <person name="Lee S.Y."/>
            <person name="Hur C.G."/>
            <person name="Spain J.C."/>
            <person name="Ovchinnikova G."/>
            <person name="Goodwin L."/>
            <person name="Han C."/>
        </authorList>
    </citation>
    <scope>NUCLEOTIDE SEQUENCE [LARGE SCALE GENOMIC DNA]</scope>
    <source>
        <strain>S110</strain>
    </source>
</reference>
<gene>
    <name evidence="1" type="primary">cobT</name>
    <name type="ordered locus">Vapar_2566</name>
</gene>
<organism>
    <name type="scientific">Variovorax paradoxus (strain S110)</name>
    <dbReference type="NCBI Taxonomy" id="543728"/>
    <lineage>
        <taxon>Bacteria</taxon>
        <taxon>Pseudomonadati</taxon>
        <taxon>Pseudomonadota</taxon>
        <taxon>Betaproteobacteria</taxon>
        <taxon>Burkholderiales</taxon>
        <taxon>Comamonadaceae</taxon>
        <taxon>Variovorax</taxon>
    </lineage>
</organism>
<sequence length="349" mass="35615">MTDSNQTIPSISDIHDGALAARLQSALDNKTKPLGALGRLESLALRIGLVLGSETPVLEAPQMLVCAADHGLAARGVSAFPSDVTWQMVENFLAGGAAVSVLALQHGLALTVVDCGVRRDFQARPGLVSRRIAAGTADASAGPAMTAEQCAQAIANGREVVRALPGNALLLGEMGIGNSSAAALLLARLAGLDIDGCTGSGTGLDAAGLARKREVLRDVLALHAAASEPLDALAAFGGFEIATLVGAVLQAAQERRVIVIDGFIASAAVLVAQALQPHVAQRCVAAHSSAEPGHALLLKHLGLEPLLNLDLRLGEGSGGALAWPLLESACRILREMASFEAAGVSRKDS</sequence>
<name>COBT_VARPS</name>
<accession>C5CKN8</accession>
<dbReference type="EC" id="2.4.2.21" evidence="1"/>
<dbReference type="EMBL" id="CP001635">
    <property type="protein sequence ID" value="ACS19192.1"/>
    <property type="molecule type" value="Genomic_DNA"/>
</dbReference>
<dbReference type="SMR" id="C5CKN8"/>
<dbReference type="STRING" id="543728.Vapar_2566"/>
<dbReference type="KEGG" id="vap:Vapar_2566"/>
<dbReference type="eggNOG" id="COG2038">
    <property type="taxonomic scope" value="Bacteria"/>
</dbReference>
<dbReference type="HOGENOM" id="CLU_002982_0_0_4"/>
<dbReference type="OrthoDB" id="9781491at2"/>
<dbReference type="UniPathway" id="UPA00061">
    <property type="reaction ID" value="UER00516"/>
</dbReference>
<dbReference type="GO" id="GO:0008939">
    <property type="term" value="F:nicotinate-nucleotide-dimethylbenzimidazole phosphoribosyltransferase activity"/>
    <property type="evidence" value="ECO:0007669"/>
    <property type="project" value="UniProtKB-UniRule"/>
</dbReference>
<dbReference type="GO" id="GO:0009236">
    <property type="term" value="P:cobalamin biosynthetic process"/>
    <property type="evidence" value="ECO:0007669"/>
    <property type="project" value="UniProtKB-KW"/>
</dbReference>
<dbReference type="CDD" id="cd02439">
    <property type="entry name" value="DMB-PRT_CobT"/>
    <property type="match status" value="1"/>
</dbReference>
<dbReference type="FunFam" id="3.40.50.10210:FF:000001">
    <property type="entry name" value="Nicotinate-nucleotide--dimethylbenzimidazole phosphoribosyltransferase"/>
    <property type="match status" value="1"/>
</dbReference>
<dbReference type="Gene3D" id="1.10.1610.10">
    <property type="match status" value="1"/>
</dbReference>
<dbReference type="Gene3D" id="3.40.50.10210">
    <property type="match status" value="1"/>
</dbReference>
<dbReference type="HAMAP" id="MF_00230">
    <property type="entry name" value="CobT"/>
    <property type="match status" value="1"/>
</dbReference>
<dbReference type="InterPro" id="IPR003200">
    <property type="entry name" value="Nict_dMeBzImd_PRibTrfase"/>
</dbReference>
<dbReference type="InterPro" id="IPR017846">
    <property type="entry name" value="Nict_dMeBzImd_PRibTrfase_bact"/>
</dbReference>
<dbReference type="InterPro" id="IPR023195">
    <property type="entry name" value="Nict_dMeBzImd_PRibTrfase_N"/>
</dbReference>
<dbReference type="InterPro" id="IPR036087">
    <property type="entry name" value="Nict_dMeBzImd_PRibTrfase_sf"/>
</dbReference>
<dbReference type="NCBIfam" id="TIGR03160">
    <property type="entry name" value="cobT_DBIPRT"/>
    <property type="match status" value="1"/>
</dbReference>
<dbReference type="NCBIfam" id="NF000996">
    <property type="entry name" value="PRK00105.1"/>
    <property type="match status" value="1"/>
</dbReference>
<dbReference type="PANTHER" id="PTHR43463">
    <property type="entry name" value="NICOTINATE-NUCLEOTIDE--DIMETHYLBENZIMIDAZOLE PHOSPHORIBOSYLTRANSFERASE"/>
    <property type="match status" value="1"/>
</dbReference>
<dbReference type="PANTHER" id="PTHR43463:SF1">
    <property type="entry name" value="NICOTINATE-NUCLEOTIDE--DIMETHYLBENZIMIDAZOLE PHOSPHORIBOSYLTRANSFERASE"/>
    <property type="match status" value="1"/>
</dbReference>
<dbReference type="Pfam" id="PF02277">
    <property type="entry name" value="DBI_PRT"/>
    <property type="match status" value="1"/>
</dbReference>
<dbReference type="SUPFAM" id="SSF52733">
    <property type="entry name" value="Nicotinate mononucleotide:5,6-dimethylbenzimidazole phosphoribosyltransferase (CobT)"/>
    <property type="match status" value="1"/>
</dbReference>